<evidence type="ECO:0000250" key="1">
    <source>
        <dbReference type="UniProtKB" id="A1CLY8"/>
    </source>
</evidence>
<evidence type="ECO:0000250" key="2">
    <source>
        <dbReference type="UniProtKB" id="Q4WAZ9"/>
    </source>
</evidence>
<evidence type="ECO:0000255" key="3"/>
<evidence type="ECO:0000255" key="4">
    <source>
        <dbReference type="PROSITE-ProRule" id="PRU00258"/>
    </source>
</evidence>
<evidence type="ECO:0000255" key="5">
    <source>
        <dbReference type="PROSITE-ProRule" id="PRU01348"/>
    </source>
</evidence>
<evidence type="ECO:0000255" key="6">
    <source>
        <dbReference type="PROSITE-ProRule" id="PRU01363"/>
    </source>
</evidence>
<evidence type="ECO:0000256" key="7">
    <source>
        <dbReference type="SAM" id="MobiDB-lite"/>
    </source>
</evidence>
<evidence type="ECO:0000269" key="8">
    <source>
    </source>
</evidence>
<evidence type="ECO:0000269" key="9">
    <source>
    </source>
</evidence>
<evidence type="ECO:0000269" key="10">
    <source>
    </source>
</evidence>
<evidence type="ECO:0000269" key="11">
    <source>
    </source>
</evidence>
<evidence type="ECO:0000269" key="12">
    <source>
    </source>
</evidence>
<evidence type="ECO:0000269" key="13">
    <source>
    </source>
</evidence>
<evidence type="ECO:0000303" key="14">
    <source>
    </source>
</evidence>
<evidence type="ECO:0000303" key="15">
    <source>
    </source>
</evidence>
<evidence type="ECO:0000303" key="16">
    <source>
    </source>
</evidence>
<evidence type="ECO:0000305" key="17"/>
<evidence type="ECO:0000305" key="18">
    <source>
    </source>
</evidence>
<evidence type="ECO:0000305" key="19">
    <source>
    </source>
</evidence>
<evidence type="ECO:0000305" key="20">
    <source>
    </source>
</evidence>
<gene>
    <name evidence="14" type="primary">ACE1</name>
    <name evidence="14" type="synonym">Pi33</name>
    <name type="ORF">MGG_12447</name>
</gene>
<protein>
    <recommendedName>
        <fullName evidence="15">Polyketide synthase-nonribosomal peptide synthetase ACE1</fullName>
        <shortName evidence="15">PKS-NRPS ACE1</shortName>
        <ecNumber evidence="12">2.3.1.-</ecNumber>
        <ecNumber evidence="12">6.3.2.-</ecNumber>
    </recommendedName>
    <alternativeName>
        <fullName evidence="16">ACE1 cytochalasan biosynthesis cluster protein ACE1</fullName>
    </alternativeName>
    <alternativeName>
        <fullName evidence="14">Avirulence conferring enzyme</fullName>
    </alternativeName>
</protein>
<comment type="function">
    <text evidence="8 9 10 11 12 13 19 20">Hybrid PKS-NRPS synthetase; part of the gene cluster that mediates the biosynthesis of a tyrosine-derived cytochalasan acting as a fungal signal recognized by resistant rice plants and leads to avirulence in Pi33 resistant rice cultivars (PubMed:12838393, PubMed:15319478, PubMed:17142568, PubMed:18433432, PubMed:29142718). The first step in the pathway is catalyzed by the hybrid PKS-NRPS ACE1, assisted by the enoyl reductase RAP1, that are responsible for fusion of the tyrosine precursor and the polyketide backbone (PubMed:29142718). The polyketide synthase module (PKS) of ACE1 is responsible for the synthesis of the polyketide backbone and the downstream nonribosomal peptide synthetase (NRPS) amidates the carboxyl end of the polyketide with the tyrosine precursor (PubMed:29142718). Because ACE1 lacks a designated enoylreductase (ER) domain, the required activity is provided the enoyl reductase RAP1 (PubMed:29142718). Reduction by the hydrolyase ORFZ, followed by dehydration and intra-molecular Diels-Alder cyclization by the Diels-Alderase ORF3 then yield the required isoindolone-fused macrocycle (Probable). A number of oxidative steps catalyzed by the tailoring enzymes identified within the cluster, including cytochrome P450 monooxygenases CYP1 to CYP4, the FAD-linked oxidoreductase OXR2 and the short-chain dehydrogenase/reductase OXR1, are further required to afford the final cytochalasans that confer avirulence and which have still to be identified (Probable). The monooxygenase CYP1 has been shown to be a site-selective C-18 hydroxylase whereas the function of CYP3 is the site-selective epoxidation of the C-6/C-7 olefin that is present in some intermediate compounds (PubMed:31644300). Finally, SYN2 and RAP2 are not required for avirulence in Pi33 resistant rice cultivars (PubMed:18433432).</text>
</comment>
<comment type="pathway">
    <text evidence="12">Secondary metabolite biosynthesis.</text>
</comment>
<comment type="subcellular location">
    <subcellularLocation>
        <location evidence="9">Cytoplasm</location>
    </subcellularLocation>
    <text evidence="9">Localizes in the cytoplasm of the appressorium.</text>
</comment>
<comment type="induction">
    <text evidence="9 10 11">Expressed exclusively during fungal penetration of host leaves, the time point at which plant defense reactions are triggered.</text>
</comment>
<comment type="domain">
    <text evidence="2 18">NRP synthetases are composed of discrete domains (adenylation (A), thiolation (T) or peptidyl carrier protein (PCP) and condensation (C) domains) which when grouped together are referred to as a single module. Each module is responsible for the recognition (via the A domain) and incorporation of a single amino acid into the growing peptide product. Thus, an NRP synthetase is generally composed of one or more modules and can terminate in a thioesterase domain (TE) that releases the newly synthesized peptide from the enzyme. Occasionally, epimerase (E) domains (responsible for L- to D- amino acid conversion) are present within the NRP synthetase. CcsA also contains a polyketide synthase module (PKS) consisting of several catalytic domains including a ketoacyl synthase domain (KS), an acyl transferase domain (AT), a dehydratase domain (DH), a methyltransferase domain (MT), and a ketoreductase domain (KR). Instead of a thioesterase domain (TE), ACE1 finishes with a reductase-like domain (R) for peptide release. ACE1 has the following architecture: KS-AT-DH-MT-KR-PCP-C-A-T-R.</text>
</comment>
<comment type="similarity">
    <text evidence="17">Belongs to the NRP synthetase family.</text>
</comment>
<proteinExistence type="evidence at protein level"/>
<keyword id="KW-0012">Acyltransferase</keyword>
<keyword id="KW-0963">Cytoplasm</keyword>
<keyword id="KW-0413">Isomerase</keyword>
<keyword id="KW-0436">Ligase</keyword>
<keyword id="KW-0489">Methyltransferase</keyword>
<keyword id="KW-0511">Multifunctional enzyme</keyword>
<keyword id="KW-0521">NADP</keyword>
<keyword id="KW-0560">Oxidoreductase</keyword>
<keyword id="KW-0596">Phosphopantetheine</keyword>
<keyword id="KW-0597">Phosphoprotein</keyword>
<keyword id="KW-1185">Reference proteome</keyword>
<keyword id="KW-0677">Repeat</keyword>
<keyword id="KW-0949">S-adenosyl-L-methionine</keyword>
<keyword id="KW-0808">Transferase</keyword>
<reference key="1">
    <citation type="journal article" date="2005" name="Nature">
        <title>The genome sequence of the rice blast fungus Magnaporthe grisea.</title>
        <authorList>
            <person name="Dean R.A."/>
            <person name="Talbot N.J."/>
            <person name="Ebbole D.J."/>
            <person name="Farman M.L."/>
            <person name="Mitchell T.K."/>
            <person name="Orbach M.J."/>
            <person name="Thon M.R."/>
            <person name="Kulkarni R."/>
            <person name="Xu J.-R."/>
            <person name="Pan H."/>
            <person name="Read N.D."/>
            <person name="Lee Y.-H."/>
            <person name="Carbone I."/>
            <person name="Brown D."/>
            <person name="Oh Y.Y."/>
            <person name="Donofrio N."/>
            <person name="Jeong J.S."/>
            <person name="Soanes D.M."/>
            <person name="Djonovic S."/>
            <person name="Kolomiets E."/>
            <person name="Rehmeyer C."/>
            <person name="Li W."/>
            <person name="Harding M."/>
            <person name="Kim S."/>
            <person name="Lebrun M.-H."/>
            <person name="Bohnert H."/>
            <person name="Coughlan S."/>
            <person name="Butler J."/>
            <person name="Calvo S.E."/>
            <person name="Ma L.-J."/>
            <person name="Nicol R."/>
            <person name="Purcell S."/>
            <person name="Nusbaum C."/>
            <person name="Galagan J.E."/>
            <person name="Birren B.W."/>
        </authorList>
    </citation>
    <scope>NUCLEOTIDE SEQUENCE [LARGE SCALE GENOMIC DNA]</scope>
    <source>
        <strain>70-15 / ATCC MYA-4617 / FGSC 8958</strain>
    </source>
</reference>
<reference key="2">
    <citation type="journal article" date="2003" name="Theor. Appl. Genet.">
        <title>Identification and fine mapping of Pi33, the rice resistance gene corresponding to the Magnaporthe grisea avirulence gene ACE1.</title>
        <authorList>
            <person name="Berruyer R."/>
            <person name="Adreit H."/>
            <person name="Milazzo J."/>
            <person name="Gaillard S."/>
            <person name="Berger A."/>
            <person name="Dioh W."/>
            <person name="Lebrun M.H."/>
            <person name="Tharreau D."/>
        </authorList>
    </citation>
    <scope>IDENTIFICATION</scope>
    <scope>FUNCTION</scope>
</reference>
<reference key="3">
    <citation type="journal article" date="2004" name="Plant Cell">
        <title>A putative polyketide synthase/peptide synthetase from Magnaporthe grisea signals pathogen attack to resistant rice.</title>
        <authorList>
            <person name="Boehnert H.U."/>
            <person name="Fudal I."/>
            <person name="Dioh W."/>
            <person name="Tharreau D."/>
            <person name="Notteghem J.L."/>
            <person name="Lebrun M.H."/>
        </authorList>
    </citation>
    <scope>FUNCTION</scope>
    <scope>INDUCTION</scope>
    <scope>SUBCELLULAR LOCATION</scope>
    <scope>DOMAIN</scope>
    <scope>MUTAGENESIS OF CYS-183</scope>
</reference>
<reference key="4">
    <citation type="journal article" date="2007" name="Eukaryot. Cell">
        <title>Expression of Magnaporthe grisea avirulence gene ACE1 is connected to the initiation of appressorium-mediated penetration.</title>
        <authorList>
            <person name="Fudal I."/>
            <person name="Collemare J."/>
            <person name="Boehnert H.U."/>
            <person name="Melayah D."/>
            <person name="Lebrun M.H."/>
        </authorList>
    </citation>
    <scope>FUNCTION</scope>
    <scope>INDUCTION</scope>
</reference>
<reference key="5">
    <citation type="journal article" date="2008" name="New Phytol.">
        <title>Magnaporthe grisea avirulence gene ACE1 belongs to an infection-specific gene cluster involved in secondary metabolism.</title>
        <authorList>
            <person name="Collemare J."/>
            <person name="Pianfetti M."/>
            <person name="Houlle A.E."/>
            <person name="Morin D."/>
            <person name="Camborde L."/>
            <person name="Gagey M.J."/>
            <person name="Barbisan C."/>
            <person name="Fudal I."/>
            <person name="Lebrun M.H."/>
            <person name="Boehnert H.U."/>
        </authorList>
    </citation>
    <scope>FUNCTION</scope>
    <scope>INDUCTION</scope>
    <scope>PATHWAY</scope>
</reference>
<reference key="6">
    <citation type="journal article" date="2015" name="Chem. Sci.">
        <title>Heterologous expression of the avirulence gene ACE1 from the fungal rice pathogen Magnaporthe oryzae.</title>
        <authorList>
            <person name="Song Z."/>
            <person name="Bakeer W."/>
            <person name="Marshall J.W."/>
            <person name="Yakasai A.A."/>
            <person name="Khalid R.M."/>
            <person name="Collemare J."/>
            <person name="Skellam E."/>
            <person name="Tharreau D."/>
            <person name="Lebrun M.H."/>
            <person name="Lazarus C.M."/>
            <person name="Bailey A.M."/>
            <person name="Simpson T.J."/>
            <person name="Cox R.J."/>
        </authorList>
    </citation>
    <scope>FUNCTION</scope>
    <scope>CATALYTIC ACTIVITY</scope>
    <scope>PATHWAY</scope>
</reference>
<reference key="7">
    <citation type="journal article" date="2019" name="Org. Lett.">
        <title>Investigating the function of cryptic cytochalasan cytochrome P450 monooxygenases using combinatorial biosynthesis.</title>
        <authorList>
            <person name="Wang C."/>
            <person name="Becker K."/>
            <person name="Pfuetze S."/>
            <person name="Kuhnert E."/>
            <person name="Stadler M."/>
            <person name="Cox R.J."/>
            <person name="Skellam E."/>
        </authorList>
    </citation>
    <scope>FUNCTION</scope>
</reference>
<dbReference type="EC" id="2.3.1.-" evidence="12"/>
<dbReference type="EC" id="6.3.2.-" evidence="12"/>
<dbReference type="EMBL" id="CM001232">
    <property type="protein sequence ID" value="EHA55860.1"/>
    <property type="molecule type" value="Genomic_DNA"/>
</dbReference>
<dbReference type="RefSeq" id="XP_003715667.1">
    <property type="nucleotide sequence ID" value="XM_003715619.1"/>
</dbReference>
<dbReference type="SMR" id="G4MVZ2"/>
<dbReference type="STRING" id="242507.G4MVZ2"/>
<dbReference type="EnsemblFungi" id="MGG_12447T0">
    <property type="protein sequence ID" value="MGG_12447T0"/>
    <property type="gene ID" value="MGG_12447"/>
</dbReference>
<dbReference type="GeneID" id="5051040"/>
<dbReference type="KEGG" id="mgr:MGG_12447"/>
<dbReference type="VEuPathDB" id="FungiDB:MGG_12447"/>
<dbReference type="eggNOG" id="KOG1178">
    <property type="taxonomic scope" value="Eukaryota"/>
</dbReference>
<dbReference type="eggNOG" id="KOG1202">
    <property type="taxonomic scope" value="Eukaryota"/>
</dbReference>
<dbReference type="HOGENOM" id="CLU_000022_48_0_1"/>
<dbReference type="InParanoid" id="G4MVZ2"/>
<dbReference type="OMA" id="VAQFGSH"/>
<dbReference type="OrthoDB" id="329835at2759"/>
<dbReference type="Proteomes" id="UP000009058">
    <property type="component" value="Chromosome 2"/>
</dbReference>
<dbReference type="GO" id="GO:0005737">
    <property type="term" value="C:cytoplasm"/>
    <property type="evidence" value="ECO:0007669"/>
    <property type="project" value="UniProtKB-SubCell"/>
</dbReference>
<dbReference type="GO" id="GO:0004315">
    <property type="term" value="F:3-oxoacyl-[acyl-carrier-protein] synthase activity"/>
    <property type="evidence" value="ECO:0007669"/>
    <property type="project" value="InterPro"/>
</dbReference>
<dbReference type="GO" id="GO:0004312">
    <property type="term" value="F:fatty acid synthase activity"/>
    <property type="evidence" value="ECO:0007669"/>
    <property type="project" value="TreeGrafter"/>
</dbReference>
<dbReference type="GO" id="GO:0016853">
    <property type="term" value="F:isomerase activity"/>
    <property type="evidence" value="ECO:0007669"/>
    <property type="project" value="UniProtKB-KW"/>
</dbReference>
<dbReference type="GO" id="GO:0016874">
    <property type="term" value="F:ligase activity"/>
    <property type="evidence" value="ECO:0007669"/>
    <property type="project" value="UniProtKB-KW"/>
</dbReference>
<dbReference type="GO" id="GO:0008168">
    <property type="term" value="F:methyltransferase activity"/>
    <property type="evidence" value="ECO:0007669"/>
    <property type="project" value="UniProtKB-KW"/>
</dbReference>
<dbReference type="GO" id="GO:0016491">
    <property type="term" value="F:oxidoreductase activity"/>
    <property type="evidence" value="ECO:0007669"/>
    <property type="project" value="UniProtKB-KW"/>
</dbReference>
<dbReference type="GO" id="GO:0031177">
    <property type="term" value="F:phosphopantetheine binding"/>
    <property type="evidence" value="ECO:0007669"/>
    <property type="project" value="InterPro"/>
</dbReference>
<dbReference type="GO" id="GO:0006633">
    <property type="term" value="P:fatty acid biosynthetic process"/>
    <property type="evidence" value="ECO:0007669"/>
    <property type="project" value="InterPro"/>
</dbReference>
<dbReference type="GO" id="GO:0032259">
    <property type="term" value="P:methylation"/>
    <property type="evidence" value="ECO:0007669"/>
    <property type="project" value="UniProtKB-KW"/>
</dbReference>
<dbReference type="GO" id="GO:0009403">
    <property type="term" value="P:toxin biosynthetic process"/>
    <property type="evidence" value="ECO:0007669"/>
    <property type="project" value="UniProtKB-ARBA"/>
</dbReference>
<dbReference type="CDD" id="cd05930">
    <property type="entry name" value="A_NRPS"/>
    <property type="match status" value="1"/>
</dbReference>
<dbReference type="CDD" id="cd02440">
    <property type="entry name" value="AdoMet_MTases"/>
    <property type="match status" value="1"/>
</dbReference>
<dbReference type="CDD" id="cd19532">
    <property type="entry name" value="C_PKS-NRPS"/>
    <property type="match status" value="1"/>
</dbReference>
<dbReference type="CDD" id="cd00833">
    <property type="entry name" value="PKS"/>
    <property type="match status" value="1"/>
</dbReference>
<dbReference type="FunFam" id="3.40.47.10:FF:000019">
    <property type="entry name" value="Polyketide synthase type I"/>
    <property type="match status" value="1"/>
</dbReference>
<dbReference type="Gene3D" id="3.30.300.30">
    <property type="match status" value="1"/>
</dbReference>
<dbReference type="Gene3D" id="3.40.47.10">
    <property type="match status" value="1"/>
</dbReference>
<dbReference type="Gene3D" id="1.10.1200.10">
    <property type="entry name" value="ACP-like"/>
    <property type="match status" value="1"/>
</dbReference>
<dbReference type="Gene3D" id="3.30.559.10">
    <property type="entry name" value="Chloramphenicol acetyltransferase-like domain"/>
    <property type="match status" value="1"/>
</dbReference>
<dbReference type="Gene3D" id="3.40.366.10">
    <property type="entry name" value="Malonyl-Coenzyme A Acyl Carrier Protein, domain 2"/>
    <property type="match status" value="1"/>
</dbReference>
<dbReference type="Gene3D" id="3.40.50.12780">
    <property type="entry name" value="N-terminal domain of ligase-like"/>
    <property type="match status" value="1"/>
</dbReference>
<dbReference type="Gene3D" id="3.40.50.720">
    <property type="entry name" value="NAD(P)-binding Rossmann-like Domain"/>
    <property type="match status" value="2"/>
</dbReference>
<dbReference type="Gene3D" id="3.30.559.30">
    <property type="entry name" value="Nonribosomal peptide synthetase, condensation domain"/>
    <property type="match status" value="1"/>
</dbReference>
<dbReference type="Gene3D" id="3.10.129.110">
    <property type="entry name" value="Polyketide synthase dehydratase"/>
    <property type="match status" value="1"/>
</dbReference>
<dbReference type="Gene3D" id="3.40.50.150">
    <property type="entry name" value="Vaccinia Virus protein VP39"/>
    <property type="match status" value="1"/>
</dbReference>
<dbReference type="InterPro" id="IPR001227">
    <property type="entry name" value="Ac_transferase_dom_sf"/>
</dbReference>
<dbReference type="InterPro" id="IPR036736">
    <property type="entry name" value="ACP-like_sf"/>
</dbReference>
<dbReference type="InterPro" id="IPR014043">
    <property type="entry name" value="Acyl_transferase_dom"/>
</dbReference>
<dbReference type="InterPro" id="IPR016035">
    <property type="entry name" value="Acyl_Trfase/lysoPLipase"/>
</dbReference>
<dbReference type="InterPro" id="IPR045851">
    <property type="entry name" value="AMP-bd_C_sf"/>
</dbReference>
<dbReference type="InterPro" id="IPR020845">
    <property type="entry name" value="AMP-binding_CS"/>
</dbReference>
<dbReference type="InterPro" id="IPR000873">
    <property type="entry name" value="AMP-dep_synth/lig_dom"/>
</dbReference>
<dbReference type="InterPro" id="IPR042099">
    <property type="entry name" value="ANL_N_sf"/>
</dbReference>
<dbReference type="InterPro" id="IPR023213">
    <property type="entry name" value="CAT-like_dom_sf"/>
</dbReference>
<dbReference type="InterPro" id="IPR001242">
    <property type="entry name" value="Condensatn"/>
</dbReference>
<dbReference type="InterPro" id="IPR013120">
    <property type="entry name" value="Far_NAD-bd"/>
</dbReference>
<dbReference type="InterPro" id="IPR018201">
    <property type="entry name" value="Ketoacyl_synth_AS"/>
</dbReference>
<dbReference type="InterPro" id="IPR014031">
    <property type="entry name" value="Ketoacyl_synth_C"/>
</dbReference>
<dbReference type="InterPro" id="IPR014030">
    <property type="entry name" value="Ketoacyl_synth_N"/>
</dbReference>
<dbReference type="InterPro" id="IPR016036">
    <property type="entry name" value="Malonyl_transacylase_ACP-bd"/>
</dbReference>
<dbReference type="InterPro" id="IPR013217">
    <property type="entry name" value="Methyltransf_12"/>
</dbReference>
<dbReference type="InterPro" id="IPR036291">
    <property type="entry name" value="NAD(P)-bd_dom_sf"/>
</dbReference>
<dbReference type="InterPro" id="IPR032821">
    <property type="entry name" value="PKS_assoc"/>
</dbReference>
<dbReference type="InterPro" id="IPR020841">
    <property type="entry name" value="PKS_Beta-ketoAc_synthase_dom"/>
</dbReference>
<dbReference type="InterPro" id="IPR042104">
    <property type="entry name" value="PKS_dehydratase_sf"/>
</dbReference>
<dbReference type="InterPro" id="IPR020807">
    <property type="entry name" value="PKS_DH"/>
</dbReference>
<dbReference type="InterPro" id="IPR049551">
    <property type="entry name" value="PKS_DH_C"/>
</dbReference>
<dbReference type="InterPro" id="IPR049552">
    <property type="entry name" value="PKS_DH_N"/>
</dbReference>
<dbReference type="InterPro" id="IPR013968">
    <property type="entry name" value="PKS_KR"/>
</dbReference>
<dbReference type="InterPro" id="IPR049900">
    <property type="entry name" value="PKS_mFAS_DH"/>
</dbReference>
<dbReference type="InterPro" id="IPR050091">
    <property type="entry name" value="PKS_NRPS_Biosynth_Enz"/>
</dbReference>
<dbReference type="InterPro" id="IPR020806">
    <property type="entry name" value="PKS_PP-bd"/>
</dbReference>
<dbReference type="InterPro" id="IPR009081">
    <property type="entry name" value="PP-bd_ACP"/>
</dbReference>
<dbReference type="InterPro" id="IPR006162">
    <property type="entry name" value="Ppantetheine_attach_site"/>
</dbReference>
<dbReference type="InterPro" id="IPR029063">
    <property type="entry name" value="SAM-dependent_MTases_sf"/>
</dbReference>
<dbReference type="InterPro" id="IPR016039">
    <property type="entry name" value="Thiolase-like"/>
</dbReference>
<dbReference type="PANTHER" id="PTHR43775">
    <property type="entry name" value="FATTY ACID SYNTHASE"/>
    <property type="match status" value="1"/>
</dbReference>
<dbReference type="PANTHER" id="PTHR43775:SF20">
    <property type="entry name" value="HYBRID PKS-NRPS SYNTHETASE APDA"/>
    <property type="match status" value="1"/>
</dbReference>
<dbReference type="Pfam" id="PF00698">
    <property type="entry name" value="Acyl_transf_1"/>
    <property type="match status" value="1"/>
</dbReference>
<dbReference type="Pfam" id="PF00501">
    <property type="entry name" value="AMP-binding"/>
    <property type="match status" value="1"/>
</dbReference>
<dbReference type="Pfam" id="PF00668">
    <property type="entry name" value="Condensation"/>
    <property type="match status" value="1"/>
</dbReference>
<dbReference type="Pfam" id="PF16197">
    <property type="entry name" value="KAsynt_C_assoc"/>
    <property type="match status" value="1"/>
</dbReference>
<dbReference type="Pfam" id="PF00109">
    <property type="entry name" value="ketoacyl-synt"/>
    <property type="match status" value="1"/>
</dbReference>
<dbReference type="Pfam" id="PF02801">
    <property type="entry name" value="Ketoacyl-synt_C"/>
    <property type="match status" value="1"/>
</dbReference>
<dbReference type="Pfam" id="PF08659">
    <property type="entry name" value="KR"/>
    <property type="match status" value="1"/>
</dbReference>
<dbReference type="Pfam" id="PF08242">
    <property type="entry name" value="Methyltransf_12"/>
    <property type="match status" value="1"/>
</dbReference>
<dbReference type="Pfam" id="PF07993">
    <property type="entry name" value="NAD_binding_4"/>
    <property type="match status" value="1"/>
</dbReference>
<dbReference type="Pfam" id="PF21089">
    <property type="entry name" value="PKS_DH_N"/>
    <property type="match status" value="1"/>
</dbReference>
<dbReference type="Pfam" id="PF00550">
    <property type="entry name" value="PP-binding"/>
    <property type="match status" value="2"/>
</dbReference>
<dbReference type="Pfam" id="PF14765">
    <property type="entry name" value="PS-DH"/>
    <property type="match status" value="1"/>
</dbReference>
<dbReference type="SMART" id="SM00827">
    <property type="entry name" value="PKS_AT"/>
    <property type="match status" value="1"/>
</dbReference>
<dbReference type="SMART" id="SM00826">
    <property type="entry name" value="PKS_DH"/>
    <property type="match status" value="1"/>
</dbReference>
<dbReference type="SMART" id="SM00822">
    <property type="entry name" value="PKS_KR"/>
    <property type="match status" value="1"/>
</dbReference>
<dbReference type="SMART" id="SM00825">
    <property type="entry name" value="PKS_KS"/>
    <property type="match status" value="1"/>
</dbReference>
<dbReference type="SMART" id="SM00823">
    <property type="entry name" value="PKS_PP"/>
    <property type="match status" value="2"/>
</dbReference>
<dbReference type="SUPFAM" id="SSF56801">
    <property type="entry name" value="Acetyl-CoA synthetase-like"/>
    <property type="match status" value="1"/>
</dbReference>
<dbReference type="SUPFAM" id="SSF47336">
    <property type="entry name" value="ACP-like"/>
    <property type="match status" value="2"/>
</dbReference>
<dbReference type="SUPFAM" id="SSF52777">
    <property type="entry name" value="CoA-dependent acyltransferases"/>
    <property type="match status" value="2"/>
</dbReference>
<dbReference type="SUPFAM" id="SSF52151">
    <property type="entry name" value="FabD/lysophospholipase-like"/>
    <property type="match status" value="1"/>
</dbReference>
<dbReference type="SUPFAM" id="SSF51735">
    <property type="entry name" value="NAD(P)-binding Rossmann-fold domains"/>
    <property type="match status" value="2"/>
</dbReference>
<dbReference type="SUPFAM" id="SSF55048">
    <property type="entry name" value="Probable ACP-binding domain of malonyl-CoA ACP transacylase"/>
    <property type="match status" value="1"/>
</dbReference>
<dbReference type="SUPFAM" id="SSF53335">
    <property type="entry name" value="S-adenosyl-L-methionine-dependent methyltransferases"/>
    <property type="match status" value="1"/>
</dbReference>
<dbReference type="SUPFAM" id="SSF53901">
    <property type="entry name" value="Thiolase-like"/>
    <property type="match status" value="1"/>
</dbReference>
<dbReference type="PROSITE" id="PS00455">
    <property type="entry name" value="AMP_BINDING"/>
    <property type="match status" value="1"/>
</dbReference>
<dbReference type="PROSITE" id="PS50075">
    <property type="entry name" value="CARRIER"/>
    <property type="match status" value="2"/>
</dbReference>
<dbReference type="PROSITE" id="PS00606">
    <property type="entry name" value="KS3_1"/>
    <property type="match status" value="1"/>
</dbReference>
<dbReference type="PROSITE" id="PS52004">
    <property type="entry name" value="KS3_2"/>
    <property type="match status" value="1"/>
</dbReference>
<dbReference type="PROSITE" id="PS00012">
    <property type="entry name" value="PHOSPHOPANTETHEINE"/>
    <property type="match status" value="1"/>
</dbReference>
<dbReference type="PROSITE" id="PS52019">
    <property type="entry name" value="PKS_MFAS_DH"/>
    <property type="match status" value="1"/>
</dbReference>
<feature type="chain" id="PRO_0000449440" description="Polyketide synthase-nonribosomal peptide synthetase ACE1">
    <location>
        <begin position="1"/>
        <end position="4034"/>
    </location>
</feature>
<feature type="domain" description="Ketosynthase family 3 (KS3)" evidence="5">
    <location>
        <begin position="10"/>
        <end position="448"/>
    </location>
</feature>
<feature type="domain" description="PKS/mFAS DH" evidence="6">
    <location>
        <begin position="951"/>
        <end position="1257"/>
    </location>
</feature>
<feature type="domain" description="Carrier 1" evidence="4">
    <location>
        <begin position="2424"/>
        <end position="2505"/>
    </location>
</feature>
<feature type="domain" description="Carrier 2" evidence="4">
    <location>
        <begin position="3598"/>
        <end position="3678"/>
    </location>
</feature>
<feature type="region of interest" description="Acyl transferase" evidence="1 3">
    <location>
        <begin position="560"/>
        <end position="879"/>
    </location>
</feature>
<feature type="region of interest" description="N-terminal hotdog fold" evidence="6">
    <location>
        <begin position="951"/>
        <end position="1082"/>
    </location>
</feature>
<feature type="region of interest" description="Dehydratase (DH) domain" evidence="1 3">
    <location>
        <begin position="952"/>
        <end position="1252"/>
    </location>
</feature>
<feature type="region of interest" description="C-terminal hotdog fold" evidence="6">
    <location>
        <begin position="1097"/>
        <end position="1257"/>
    </location>
</feature>
<feature type="region of interest" description="Methyltransferase (MT) domain" evidence="1 3">
    <location>
        <begin position="1396"/>
        <end position="1594"/>
    </location>
</feature>
<feature type="region of interest" description="Ketoreductase (KR)domain" evidence="1 3">
    <location>
        <begin position="2144"/>
        <end position="2317"/>
    </location>
</feature>
<feature type="region of interest" description="Disordered" evidence="7">
    <location>
        <begin position="2512"/>
        <end position="2598"/>
    </location>
</feature>
<feature type="region of interest" description="Condensation" evidence="1 3">
    <location>
        <begin position="2608"/>
        <end position="3037"/>
    </location>
</feature>
<feature type="region of interest" description="Adenylation" evidence="1 3">
    <location>
        <begin position="3073"/>
        <end position="3473"/>
    </location>
</feature>
<feature type="region of interest" description="Reductase-like" evidence="1 3">
    <location>
        <begin position="3719"/>
        <end position="3944"/>
    </location>
</feature>
<feature type="compositionally biased region" description="Low complexity" evidence="7">
    <location>
        <begin position="2556"/>
        <end position="2577"/>
    </location>
</feature>
<feature type="compositionally biased region" description="Polar residues" evidence="7">
    <location>
        <begin position="2586"/>
        <end position="2598"/>
    </location>
</feature>
<feature type="active site" description="For beta-ketoacyl synthase activity" evidence="5">
    <location>
        <position position="183"/>
    </location>
</feature>
<feature type="active site" description="For beta-ketoacyl synthase activity" evidence="5">
    <location>
        <position position="322"/>
    </location>
</feature>
<feature type="active site" description="For beta-ketoacyl synthase activity" evidence="5">
    <location>
        <position position="368"/>
    </location>
</feature>
<feature type="active site" description="Proton acceptor; for dehydratase activity" evidence="6">
    <location>
        <position position="983"/>
    </location>
</feature>
<feature type="active site" description="Proton donor; for dehydratase activity" evidence="6">
    <location>
        <position position="1157"/>
    </location>
</feature>
<feature type="modified residue" description="O-(pantetheine 4'-phosphoryl)serine" evidence="4">
    <location>
        <position position="2465"/>
    </location>
</feature>
<feature type="modified residue" description="O-(pantetheine 4'-phosphoryl)serine" evidence="4">
    <location>
        <position position="3638"/>
    </location>
</feature>
<feature type="mutagenesis site" description="Abolishes recognition of the fungus by resistant rice plants." evidence="9">
    <original>C</original>
    <variation>A</variation>
    <location>
        <position position="183"/>
    </location>
</feature>
<accession>G4MVZ2</accession>
<organism>
    <name type="scientific">Pyricularia oryzae (strain 70-15 / ATCC MYA-4617 / FGSC 8958)</name>
    <name type="common">Rice blast fungus</name>
    <name type="synonym">Magnaporthe oryzae</name>
    <dbReference type="NCBI Taxonomy" id="242507"/>
    <lineage>
        <taxon>Eukaryota</taxon>
        <taxon>Fungi</taxon>
        <taxon>Dikarya</taxon>
        <taxon>Ascomycota</taxon>
        <taxon>Pezizomycotina</taxon>
        <taxon>Sordariomycetes</taxon>
        <taxon>Sordariomycetidae</taxon>
        <taxon>Magnaporthales</taxon>
        <taxon>Pyriculariaceae</taxon>
        <taxon>Pyricularia</taxon>
    </lineage>
</organism>
<name>ACE1_PYRO7</name>
<sequence>MRDEMWNTATEPIAIIGSGCKFPGGSTTPSKLWELLKDPKDIVSEIRPDRFDVDKYFHPDHKHHGTSNVRHSYFLEENFKHFDAKFFGIRPQEAMAMDPQQRFLLETVYESLEAAGITISDLKGSQAGVFVGNMGVDYSELLSQDIDAFPTYFAPGTARSILSNRISYFFDLHGPSVTVDTACSSSLVAVHQAVQSLRLGETPVAIVCGANLLLGPAQYIAESKLQMLSPNGRSRMWDASADGYARGEGFASIVLKPLSVALANGDHIECIIRETGCNQDGRTKGITMPSPLAQCKLIQETYKRAGLDLSKSSDRPQYFEAHGTGTPAGDPVEAEAISTAFFGPESGFRRTSHDPKLYVGSVKTVIGHTEGTAGLAGLIKASLAMKAKSIPPNLHLERVNPAVQPFYGNLEIPTRLMDWPEPAPGQPLRASVNSFGFGGANAHVILESYTPAAEVAMVTPTAAAGPVFSPFVFSASSDKALASMLSAYSDYLSLNPTVDLRSVAYTLSQHRSVFDKRAAISAPDLDTLKTKLKARSEEASPSGKTAAVQSLERRPRYLGVFTGQGAQWARMGVDVINASPAARAIFEDLEQSLKTLPEEDRPSWSMLEELLAPPETSRVYQANISQTVCTAVQVMMVQLLRAAGIEFSCVVGHSSGEMAAAYTAGYLSARDAVRAAYFRGVHSQLAKGSNGQPGGMIAVGTNFEDAEELCELDDFKGRLCVAASNSAELVTLSGDLDAVQEVKKILDAEEKFNKQLQVDKGYHSHHMLPCSEPYVASLQKCGIQAQVPGDATACRWISSVYVDDMTNLDCRVQDRYWIENLAKPVMFSQALSHALGGDDKFDSVIEVGPHPALKGPASQTIQACLGERLPYFGCLSRGTDSNEAFAEFLGGVWSTFGSSAVDLAAYERFATGGCDQRLVKGLPSYTWDHDVEHYFQSRLSKVVLHRSTPPNELLGTRLPDDTAGEVRWRNSLHPGELPWLLQHSAQGQTVFPGTGYIATTLEAVKQLFDSSGVQTVEIRDMVIGNALVIEANTGVETLFSLTFINTQTDRITAHFSFCSQQGGSTKLVENASGDLVVLLGEPSEDALPRSFHPGTQMKDIDEERFYEAIDKLGYGYEGPFRALSQLQRRMGAATGLVAIPEKTKHFDQMVLHPAALDAMVQTVLLAYCYPGDTRLQGISLPTGIDCIRFNYGMLSEAARPGCQLPFLSCTAFEGDDVLGGVGGDVGGDVDVFSEDKRFALIQLQGLHTKPLSPPSAATDLQIFSEMEWKTASPEGADMEVRGEKRAYVADLYSSMERVAYFYMRHVDREIGKDRSGLAPHQVRFLEWVDHMCGRVEAGTLPHISRKWDHDTRQDILKIIAKYPDSIDLELMHAVGENLCSVFRGEMNALEPMVKKNMLNRFYSDALGMSPYTEDLARMVGHITHRYPHMNILEVGAGTGGATKVMLRRLQDAFASYTYTDISSGFFADARQVFKAHESKMLFKTLDIEKDIVDQGYEENSFDLVIANLVVHATADLDATMGRLRRLVKPGGHLVLLEITTNDPLRFGFIFGPLPGWWLGGEDGRVHSPCVDVEWWDRVMKRNGFSGADIVTPHHTLGPLSVIMTQAVDHRVQLLRQPTSADFGDFTIDPERLTIVGGVKPLAEGLEQLLKPRYQSVAWIPTLEEVSSHSLPVMGSVLSLVELDEPLFKDMTAQTLEGFKFVFQQSRSVYWITCGASGANPYSNMAAGVARTVALEMRHLRLGFLDFEDAKDATVQRLADRFLEFEILGTLEQQGKLDHLTWYQEPELRFDGKNLLVPRMKLSKDRNGRYNSRRRQLTKNVNPREVPVSLVPTTSGKDFVLKESLSSSSTKHGAQDTVSLRVHYASQRSLRLESSDYLFLVLGTNLSSGEAMFALADSNRSIVHVDRQWTTSYLGNLDHGRHALADLYTQIMASTVVAGLSAGDSLVVLDAETPLSQALSARCAAKGVRLTLLSTTTATSHSEADGTNKTNVRIHPLESRRSIESKLPSNATCFLDLSTNNGSEAAAVINSYIPAQCRVETRDTLTATACQVTRSTSTGGLGPAVGDVLPACWANVEAAGRDLSFFSAAVVTPTELTAAAGNGKTSAPRVGDDALLLITDWTAEAEVGVLVQPADSMVRFRQDKTYWLVGLTGGLALSLCRWMVNRGARYVVMTSRNPKIDKEWLQGVESCGATVKIFSNDVTDRAAVNSAYRTISATLPPIAGVVQGAMVLRDTMFAETTMETIESILGPKVRGSIYLDEIFYSTPLDFFVFLSSVTATSGNPGQSIYAGANMFMNSLAAQRRKRGVAGSSVEIGCIMGNGSVTTILSYEHQKYLFSVGNTWLAEQDFLTMFGEAVLASPPDAPDSVTSVTGLRLQFNDDKPDITWFSNPIFQHLVLQSGNAMQTSLSVARQGTPVKSLLQEAKSSEEVLDILKDAFTAKLVSSLQADPDSNLLEVDLETLGMDSLVAVDLRSWFLAELSVDVPVLKILNGSTARLLLEFVQGLIPASMTPKLDGSDGADAAAQEAPPVAPPVTKPKPDVSVKVPPPHQPVASLKPSGPASPTSPSSATASPGRSRSVASPVTADTPVSPTTSASMASLNDSRKLIRTVPVSFGQSRFWFLGSYNPDPLAFNITSLMRISGPLRTNDFGKAVDKVLNHHEALRTSFVSENDAPVQKIWSSPAFALEQRKIADDESEVVKAYTEVQNTRYNLEAGQTMRIMLLTKSPTKHVLVLGYHHINMDGVSFEVLFSDIEKAYNRTPLDRSVMQFPDFTIREAGEYKSGAWRSELQYWQSKFTSLPEPTPLLSVSKRRTRPVNLSYTTHSVSRRINAEQSQAIHTVGRKFKATPFHFYLSVFKTLIARFSGADDFCIGIADANRKEDKVMGAVGLYLNLLPLRVRSALGQTFGETLADMKKVSQEAFANSKVPFDVLLNELSVPRSSSQTPLFQTFVNYRRGVSEERSFCGCTGAGELISGGQIGYDISLDIVENPGGDALVTLSVQKDLYNVDMANLLLDSYFRLVDSFAKNPATSLNRPAIYDPVAVDKALTLGCGPTLEDSSWPETLIHRIENMSVKYATKFALRNGQNGGLTYSQMIARINDIAAKLIDAKVGTGIVGVMQASTMDFICSILAVWKAGAIYTPLDPRLNSTDRLKAVVDECQPACILVDATTKPLFDSLATNAVQIDVSMVQSSKTLEASPKVAIHAKAPSAAAVFYTSGSTGVPKGITLSHASLTYNIMAATRQFGFKEGVDIMLQQSSFSFDMALAQMLTSLSNGGTLVVVPSHLRGDALGLSQLIVAENVSIVQASPTEYKSLIGVNAQHLKTSKWRVALSGGENMTQSLLEVFRSLGKPDLVLFNGYGPTEATINANTRIVPYHEPNSNPDLPLLTWPNYSISIVDLELNPVPVGVFGEVCIGGAGVGLGYFKNDELTAKAFVADKTAPAEFVAKGWKTKFRTGDLGRLSPDGGLIIEGRIDGDTQVKLRGMRIDLKNIESAILQAGAGKIIDAAVSVRRGGADESEPQYLVGHVVLDADQTPEDSQQDFLAQLIPRLRLPRHMKPSLLVPIRALPQTASHKLDRRALQQLPISDAGQIAKQSQQGAELGSDQARMWKLWKQVIPRDVVSQYSITPQSDFFHVGGTSLLLVNLQSLIAREHGRAPPLHAMFESSTVAAMTDLVLSDDASGSTALIDWEQETSIPTLPPHIIPGGAGNKVSVPPRVVLLTGATGFLGRQLMAFLLRQPSVKRIHCLAVRGGAPPSSAAPFSDPRVSIHAGDLNAPHLGLGEAVAELLFAQADVIIHNGADVSFLKTYATLRATNVGSTRELARLAAPRRIPFHFVSSASITQLTGLDEFGEASMAAWAPPADPRGMSGGYAAAKWASEVLLEKAARAWGLPVVIHRPSSITGEGTNSLDLMGNMFKYIEQLEAVPESDSWKGNFDFVSVENVAADIVQAVVAANVVAAGGVKFIYEAGDIVYPLSMVKDMSEGGAKLPVKTMPLAKWVEKAAEKGLDSMLAEYLIKAASTGTSLAFPRLLKDGN</sequence>